<evidence type="ECO:0000250" key="1">
    <source>
        <dbReference type="UniProtKB" id="P19651"/>
    </source>
</evidence>
<evidence type="ECO:0000255" key="2"/>
<evidence type="ECO:0000269" key="3">
    <source>
    </source>
</evidence>
<evidence type="ECO:0000269" key="4">
    <source>
    </source>
</evidence>
<evidence type="ECO:0000269" key="5">
    <source>
    </source>
</evidence>
<evidence type="ECO:0000269" key="6">
    <source>
    </source>
</evidence>
<evidence type="ECO:0000303" key="7">
    <source>
    </source>
</evidence>
<evidence type="ECO:0000303" key="8">
    <source>
    </source>
</evidence>
<evidence type="ECO:0000305" key="9"/>
<evidence type="ECO:0000305" key="10">
    <source>
    </source>
</evidence>
<gene>
    <name type="ORF">v1g150294</name>
</gene>
<protein>
    <recommendedName>
        <fullName evidence="7">Putative N.vectensis toxin 1 9</fullName>
        <shortName evidence="7">Nv1</shortName>
    </recommendedName>
    <alternativeName>
        <fullName>Neurotoxin Nv1-3391.7.1</fullName>
    </alternativeName>
    <alternativeName>
        <fullName evidence="8">Putative delta-edwarditoxin-Nvc1a</fullName>
        <shortName evidence="8">Delta-EWTX-Nvc1a</shortName>
    </alternativeName>
</protein>
<organism>
    <name type="scientific">Nematostella vectensis</name>
    <name type="common">Starlet sea anemone</name>
    <dbReference type="NCBI Taxonomy" id="45351"/>
    <lineage>
        <taxon>Eukaryota</taxon>
        <taxon>Metazoa</taxon>
        <taxon>Cnidaria</taxon>
        <taxon>Anthozoa</taxon>
        <taxon>Hexacorallia</taxon>
        <taxon>Actiniaria</taxon>
        <taxon>Edwardsiidae</taxon>
        <taxon>Nematostella</taxon>
    </lineage>
</organism>
<accession>P0CH45</accession>
<accession>A7SCD9</accession>
<reference key="1">
    <citation type="journal article" date="2007" name="Science">
        <title>Sea anemone genome reveals ancestral eumetazoan gene repertoire and genomic organization.</title>
        <authorList>
            <person name="Putnam N.H."/>
            <person name="Srivastava M."/>
            <person name="Hellsten U."/>
            <person name="Dirks B."/>
            <person name="Chapman J."/>
            <person name="Salamov A."/>
            <person name="Terry A."/>
            <person name="Shapiro H."/>
            <person name="Lindquist E."/>
            <person name="Kapitonov V.V."/>
            <person name="Jurka J."/>
            <person name="Genikhovich G."/>
            <person name="Grigoriev I.V."/>
            <person name="Lucas S.M."/>
            <person name="Steele R.E."/>
            <person name="Finnerty J.R."/>
            <person name="Technau U."/>
            <person name="Martindale M.Q."/>
            <person name="Rokhsar D.S."/>
        </authorList>
    </citation>
    <scope>NUCLEOTIDE SEQUENCE [LARGE SCALE GENOMIC DNA]</scope>
    <source>
        <strain>CH2 X CH6</strain>
    </source>
</reference>
<reference key="2">
    <citation type="journal article" date="2008" name="J. Mol. Biol.">
        <title>Intron retention as a posttranscriptional regulatory mechanism of neurotoxin expression at early life stages of the starlet anemone Nematostella vectensis.</title>
        <authorList>
            <person name="Moran Y."/>
            <person name="Weinberger H."/>
            <person name="Reitzel A.M."/>
            <person name="Sullivan J.C."/>
            <person name="Kahn R."/>
            <person name="Gordon D."/>
            <person name="Finnerty J.R."/>
            <person name="Gurevitz M."/>
        </authorList>
    </citation>
    <scope>FUNCTION</scope>
    <scope>ALTERNATIVE SPLICING</scope>
    <scope>DEVELOPMENTAL STAGE</scope>
    <scope>TOXIC DOSE</scope>
</reference>
<reference key="3">
    <citation type="journal article" date="2012" name="Proc. R. Soc. B">
        <title>Neurotoxin localization to ectodermal gland cells uncovers an alternative mechanism of venom delivery in sea anemones.</title>
        <authorList>
            <person name="Moran Y."/>
            <person name="Genikhovich G."/>
            <person name="Gordon D."/>
            <person name="Wienkoop S."/>
            <person name="Zenkert C."/>
            <person name="Ozbek S."/>
            <person name="Technau U."/>
            <person name="Gurevitz M."/>
        </authorList>
    </citation>
    <scope>FUNCTION</scope>
    <scope>TISSUE SPECIFICITY</scope>
    <scope>DEVELOPMENTAL STAGE</scope>
</reference>
<reference key="4">
    <citation type="journal article" date="2012" name="Toxicon">
        <title>Development of a rational nomenclature for naming peptide and protein toxins from sea anemones.</title>
        <authorList>
            <person name="Oliveira J.S."/>
            <person name="Fuentes-Silva D."/>
            <person name="King G.F."/>
        </authorList>
    </citation>
    <scope>NOMENCLATURE</scope>
</reference>
<reference key="5">
    <citation type="journal article" date="2018" name="Elife">
        <title>Dynamics of venom composition across a complex life cycle.</title>
        <authorList>
            <person name="Columbus-Shenkar Y.Y."/>
            <person name="Sachkova M.Y."/>
            <person name="Macrander J."/>
            <person name="Fridrich A."/>
            <person name="Modepalli V."/>
            <person name="Reitzel A.M."/>
            <person name="Sunagar K."/>
            <person name="Moran Y."/>
        </authorList>
    </citation>
    <scope>FUNCTION</scope>
    <scope>DEVELOPMENTAL STAGE</scope>
</reference>
<reference key="6">
    <citation type="journal article" date="2019" name="Mol. Biol. Evol.">
        <title>The birth and death of toxins with distinct functions: a case study in the sea anemone Nematostella.</title>
        <authorList>
            <person name="Sachkova M.Y."/>
            <person name="Singer S.A."/>
            <person name="Macrander J."/>
            <person name="Reitzel A.M."/>
            <person name="Peigneur S."/>
            <person name="Tytgat J."/>
            <person name="Moran Y."/>
        </authorList>
    </citation>
    <scope>FUNCTION</scope>
    <scope>IDENTIFICATION BY MASS SPECTROMETRY</scope>
    <scope>DEVELOPMENTAL STAGE</scope>
</reference>
<dbReference type="EMBL" id="DS472756">
    <property type="protein sequence ID" value="EDO27690.1"/>
    <property type="status" value="ALT_SEQ"/>
    <property type="molecule type" value="Genomic_DNA"/>
</dbReference>
<dbReference type="RefSeq" id="XP_001619790.1">
    <property type="nucleotide sequence ID" value="XM_001619740.1"/>
</dbReference>
<dbReference type="RefSeq" id="XP_001630732.1">
    <property type="nucleotide sequence ID" value="XM_001630682.1"/>
</dbReference>
<dbReference type="SMR" id="P0CH45"/>
<dbReference type="HOGENOM" id="CLU_2944416_0_0_1"/>
<dbReference type="InParanoid" id="P0CH45"/>
<dbReference type="PhylomeDB" id="P0CH45"/>
<dbReference type="Proteomes" id="UP000001593">
    <property type="component" value="Unassembled WGS sequence"/>
</dbReference>
<dbReference type="GO" id="GO:0005576">
    <property type="term" value="C:extracellular region"/>
    <property type="evidence" value="ECO:0007669"/>
    <property type="project" value="UniProtKB-SubCell"/>
</dbReference>
<dbReference type="GO" id="GO:0017080">
    <property type="term" value="F:sodium channel regulator activity"/>
    <property type="evidence" value="ECO:0007669"/>
    <property type="project" value="UniProtKB-KW"/>
</dbReference>
<dbReference type="GO" id="GO:0090729">
    <property type="term" value="F:toxin activity"/>
    <property type="evidence" value="ECO:0007669"/>
    <property type="project" value="UniProtKB-KW"/>
</dbReference>
<dbReference type="Gene3D" id="2.20.20.10">
    <property type="entry name" value="Anthopleurin-A"/>
    <property type="match status" value="1"/>
</dbReference>
<dbReference type="InterPro" id="IPR023355">
    <property type="entry name" value="Myo_ane_neurotoxin_sf"/>
</dbReference>
<dbReference type="Pfam" id="PF00706">
    <property type="entry name" value="Toxin_4"/>
    <property type="match status" value="1"/>
</dbReference>
<dbReference type="SUPFAM" id="SSF57392">
    <property type="entry name" value="Defensin-like"/>
    <property type="match status" value="1"/>
</dbReference>
<feature type="signal peptide" evidence="2">
    <location>
        <begin position="1"/>
        <end position="20"/>
    </location>
</feature>
<feature type="propeptide" id="PRO_0000398321" evidence="9">
    <location>
        <begin position="21"/>
        <end position="36"/>
    </location>
</feature>
<feature type="chain" id="PRO_0000398322" description="Putative N.vectensis toxin 1 9" evidence="10">
    <location>
        <begin position="39"/>
        <end position="85"/>
    </location>
</feature>
<feature type="disulfide bond" evidence="1">
    <location>
        <begin position="42"/>
        <end position="82"/>
    </location>
</feature>
<feature type="disulfide bond" evidence="1">
    <location>
        <begin position="44"/>
        <end position="72"/>
    </location>
</feature>
<feature type="disulfide bond" evidence="1">
    <location>
        <begin position="65"/>
        <end position="83"/>
    </location>
</feature>
<feature type="splice variant" id="VSP_039753" description="In isoform 2." evidence="9">
    <original>RDMMSDDELDYHFSKRGIPCACDSDGPDIRSASLSGIVWMGSCPSGWKKCKSYYSIVADCCNQ</original>
    <variation>K</variation>
    <location>
        <begin position="23"/>
        <end position="85"/>
    </location>
</feature>
<name>NA291_NEMVE</name>
<sequence>MASFKIVIVCLALLVAVASARRRDMMSDDELDYHFSKRGIPCACDSDGPDIRSASLSGIVWMGSCPSGWKKCKSYYSIVADCCNQ</sequence>
<keyword id="KW-0025">Alternative splicing</keyword>
<keyword id="KW-0165">Cleavage on pair of basic residues</keyword>
<keyword id="KW-1015">Disulfide bond</keyword>
<keyword id="KW-0872">Ion channel impairing toxin</keyword>
<keyword id="KW-0528">Neurotoxin</keyword>
<keyword id="KW-1185">Reference proteome</keyword>
<keyword id="KW-0964">Secreted</keyword>
<keyword id="KW-0732">Signal</keyword>
<keyword id="KW-0800">Toxin</keyword>
<keyword id="KW-0738">Voltage-gated sodium channel impairing toxin</keyword>
<comment type="function">
    <text evidence="3 4 5 6">Binds to site 3 of voltage-gated sodium channels and inhibits the inactivation process (PubMed:18538344). Is highly active on DmNav1/TipE (drosophila) and is only extremely weakly active on rat Nav1.4-beta-1/SCN4A-SCN1B, and on human Nav1.5-beta-1/SCN5A-beta-1 (PubMed:18538344). This reveals high specificity for arthropod over mammalian channels (PubMed:18538344). In vivo, when released into the medium, this recombinant toxin induces impaired swimming, paralysis and death of the crustacean A.nauplii within several hours (PubMed:22048953). Also causes paralysis of cherry shrimps immediately after injection at very low doses (PubMed:29424690). Its effect on zebrafish (D.rerio) larvae is also rapid, since it induces tail twitching accompanied by impaired swimming after 20 minutes and complete paralysis within 45 minutes (PubMed:22048953). It has also been observed to cause death of zebrafish larvae within 1 hour (PubMed:31134275).</text>
</comment>
<comment type="subcellular location">
    <subcellularLocation>
        <location evidence="3">Secreted</location>
    </subcellularLocation>
</comment>
<comment type="alternative products">
    <event type="alternative splicing"/>
    <isoform>
        <id>P0CH45-1</id>
        <name>1</name>
        <sequence type="displayed"/>
    </isoform>
    <isoform>
        <id>P0CH45-2</id>
        <name>2</name>
        <name>truncated</name>
        <sequence type="described" ref="VSP_039753"/>
    </isoform>
    <text>Intron retention discovered for all transcripts, no experimental confirmation available for this specific sequence.</text>
</comment>
<comment type="tissue specificity">
    <text evidence="4 5">Expressed in ectodermal glands and in clumps outside of the extodermal layer (PubMed:22048953). Is not expressed in nematocytes (PubMed:22048953). In adult female tissues, shows similar expression levels in mesenteries (gametes-producing tissue), tentacles, pharynx and physa (PubMed:29424690).</text>
</comment>
<comment type="developmental stage">
    <text evidence="3 4 5 6">Is detected in unfertilized eggs (at protein level) (PubMed:29424690, PubMed:31134275). Is also detected in late planulae, primary polyps and adults (both females and males) (at protein level) (PubMed:22048953, PubMed:29424690). Nv1 is transcribed throughout the complete life cycle and is found at multiple developmental stages including unfertilized eggs, blastulae, gastrulae, early planulae, planulae, metamorphosing planulae, primary polyps, juvenile polyps (2 and 4 months old), adult males, and adult females, with highest levels in juvenile polyps and adults (PubMed:18538344, PubMed:29424690). Importantly, Nv1 transcripts are not spliced in the embryo and planula due to intron retention and therefore Nv1 can be considered purely an adult toxin (PubMed:18538344).</text>
</comment>
<comment type="toxic dose">
    <text evidence="3">PD(50) is 76 nmol/kg into blowfly larvae.</text>
</comment>
<comment type="miscellaneous">
    <text>Nv1 toxin seems to be encoded by 8 different genes. 4 of them code for identical precursors, whereas 4 others code for very similar precursors. In the genome draft, 6 additional loci are also correlated to Nv1 toxin, but they are not predicted to be functional genes. This high similarity may be explained by concerted evolution.</text>
</comment>
<comment type="miscellaneous">
    <text evidence="9">The primary structure of the mature peptide is identical in 9 entries (AC B1NWS4, AC B1NWS1, AC B1NWR6, AC P0CH90, AC P0CH46, AC B1NWS8, AC A7SCE5, AC B1NWR7 and AC P0CH45). Additional information can be found in entry AC B1NWS4.</text>
</comment>
<comment type="miscellaneous">
    <molecule>Isoform 2</molecule>
    <text evidence="9">Due to an intron retention observed only in early life stages (embryo and planula).</text>
</comment>
<comment type="miscellaneous">
    <text evidence="3">Negative results: has no activity on the rat brain channel Nav1.2a-beta-1/SCN2A-SCN1B.</text>
</comment>
<comment type="similarity">
    <text evidence="9">Belongs to the sea anemone sodium channel inhibitory toxin family. Type II subfamily.</text>
</comment>
<comment type="caution">
    <text evidence="9">Could be the product of a pseudogene.</text>
</comment>
<comment type="sequence caution" evidence="9">
    <conflict type="erroneous gene model prediction">
        <sequence resource="EMBL-CDS" id="EDO27690"/>
    </conflict>
</comment>
<proteinExistence type="uncertain"/>